<proteinExistence type="evidence at transcript level"/>
<evidence type="ECO:0000250" key="1">
    <source>
        <dbReference type="UniProtKB" id="Q9BQ65"/>
    </source>
</evidence>
<evidence type="ECO:0000255" key="2">
    <source>
        <dbReference type="HAMAP-Rule" id="MF_03040"/>
    </source>
</evidence>
<evidence type="ECO:0000256" key="3">
    <source>
        <dbReference type="SAM" id="MobiDB-lite"/>
    </source>
</evidence>
<reference key="1">
    <citation type="submission" date="2003-01" db="EMBL/GenBank/DDBJ databases">
        <authorList>
            <consortium name="NIH - Xenopus Gene Collection (XGC) project"/>
        </authorList>
    </citation>
    <scope>NUCLEOTIDE SEQUENCE [LARGE SCALE MRNA]</scope>
    <source>
        <tissue>Embryo</tissue>
    </source>
</reference>
<keyword id="KW-0378">Hydrolase</keyword>
<keyword id="KW-0456">Lyase</keyword>
<keyword id="KW-0540">Nuclease</keyword>
<keyword id="KW-0539">Nucleus</keyword>
<keyword id="KW-1185">Reference proteome</keyword>
<accession>Q7ZYI9</accession>
<gene>
    <name evidence="2" type="primary">usb1</name>
</gene>
<feature type="chain" id="PRO_0000274395" description="U6 snRNA phosphodiesterase 1">
    <location>
        <begin position="1"/>
        <end position="250"/>
    </location>
</feature>
<feature type="region of interest" description="Disordered" evidence="3">
    <location>
        <begin position="1"/>
        <end position="31"/>
    </location>
</feature>
<feature type="compositionally biased region" description="Pro residues" evidence="3">
    <location>
        <begin position="22"/>
        <end position="31"/>
    </location>
</feature>
<feature type="active site" description="Proton acceptor" evidence="2">
    <location>
        <position position="105"/>
    </location>
</feature>
<feature type="active site" description="Proton donor" evidence="2">
    <location>
        <position position="193"/>
    </location>
</feature>
<feature type="binding site" evidence="1">
    <location>
        <begin position="105"/>
        <end position="107"/>
    </location>
    <ligand>
        <name>AMP</name>
        <dbReference type="ChEBI" id="CHEBI:456215"/>
    </ligand>
</feature>
<feature type="binding site" evidence="1">
    <location>
        <position position="149"/>
    </location>
    <ligand>
        <name>UMP</name>
        <dbReference type="ChEBI" id="CHEBI:57865"/>
    </ligand>
</feature>
<feature type="binding site" evidence="1">
    <location>
        <position position="187"/>
    </location>
    <ligand>
        <name>AMP</name>
        <dbReference type="ChEBI" id="CHEBI:456215"/>
    </ligand>
</feature>
<feature type="binding site" evidence="1">
    <location>
        <position position="187"/>
    </location>
    <ligand>
        <name>UMP</name>
        <dbReference type="ChEBI" id="CHEBI:57865"/>
    </ligand>
</feature>
<feature type="binding site" evidence="1">
    <location>
        <begin position="189"/>
        <end position="195"/>
    </location>
    <ligand>
        <name>AMP</name>
        <dbReference type="ChEBI" id="CHEBI:456215"/>
    </ligand>
</feature>
<feature type="binding site" evidence="1">
    <location>
        <begin position="191"/>
        <end position="195"/>
    </location>
    <ligand>
        <name>UMP</name>
        <dbReference type="ChEBI" id="CHEBI:57865"/>
    </ligand>
</feature>
<sequence length="250" mass="28999">MALVSYSSSEEDEGETSEPPGRRLPPLPPPTTVLRMFQDMEGDEDLDENTKHEGRIRSFKHERGNWATYVYIPFQPQEEFLDLLDELVSVAAENGVLLTKMSEFHISQSQTVVLRHHWINPFVESLKDKLHCMYRFLCIAERIKVYTNQEKTRTFLGLEVSVGMEHLLEVVSEVDRSLQEFNLQTFYQEPSFHVSLAWCVGDKYEKLKGSCLLELQKVIDRFEDSDTLTRFNAEEIRCKAGNKTFCIPLL</sequence>
<organism>
    <name type="scientific">Xenopus laevis</name>
    <name type="common">African clawed frog</name>
    <dbReference type="NCBI Taxonomy" id="8355"/>
    <lineage>
        <taxon>Eukaryota</taxon>
        <taxon>Metazoa</taxon>
        <taxon>Chordata</taxon>
        <taxon>Craniata</taxon>
        <taxon>Vertebrata</taxon>
        <taxon>Euteleostomi</taxon>
        <taxon>Amphibia</taxon>
        <taxon>Batrachia</taxon>
        <taxon>Anura</taxon>
        <taxon>Pipoidea</taxon>
        <taxon>Pipidae</taxon>
        <taxon>Xenopodinae</taxon>
        <taxon>Xenopus</taxon>
        <taxon>Xenopus</taxon>
    </lineage>
</organism>
<comment type="function">
    <text evidence="1">3'-5' RNA exonuclease that trims the 3' end of oligo(U) and oligo(A) tracts of the pre-U6 small nuclear RNA (snRNA) molecule, leading to the formation of a mature U6 snRNA 3' end-terminated with a 2',3'-cyclic phosphate. Participates in the U6 snRNA 3' end processing that prevents U6 snRNA degradation. In addition also removes uridines from the 3' end of U6atac snRNA and possibly the vault RNA VTRNA1-1.</text>
</comment>
<comment type="catalytic activity">
    <reaction evidence="1">
        <text>a 3'-end uridylyl-uridine-RNA = a 3'-end 2',3'-cyclophospho-uridine-RNA + uridine</text>
        <dbReference type="Rhea" id="RHEA:46052"/>
        <dbReference type="Rhea" id="RHEA-COMP:17384"/>
        <dbReference type="Rhea" id="RHEA-COMP:17385"/>
        <dbReference type="ChEBI" id="CHEBI:16704"/>
        <dbReference type="ChEBI" id="CHEBI:85643"/>
        <dbReference type="ChEBI" id="CHEBI:85644"/>
    </reaction>
    <physiologicalReaction direction="left-to-right" evidence="1">
        <dbReference type="Rhea" id="RHEA:46053"/>
    </physiologicalReaction>
</comment>
<comment type="catalytic activity">
    <reaction evidence="1">
        <text>a 3'-end uridylyl-adenosine-RNA = a 3'-end 2',3'-cyclophospho-uridine-RNA + adenosine</text>
        <dbReference type="Rhea" id="RHEA:67896"/>
        <dbReference type="Rhea" id="RHEA-COMP:17385"/>
        <dbReference type="Rhea" id="RHEA-COMP:17386"/>
        <dbReference type="ChEBI" id="CHEBI:16335"/>
        <dbReference type="ChEBI" id="CHEBI:85644"/>
        <dbReference type="ChEBI" id="CHEBI:176518"/>
    </reaction>
    <physiologicalReaction direction="left-to-right" evidence="1">
        <dbReference type="Rhea" id="RHEA:67897"/>
    </physiologicalReaction>
</comment>
<comment type="subcellular location">
    <subcellularLocation>
        <location evidence="2">Nucleus</location>
    </subcellularLocation>
</comment>
<comment type="similarity">
    <text evidence="2">Belongs to the 2H phosphoesterase superfamily. USB1 family.</text>
</comment>
<name>USB1_XENLA</name>
<protein>
    <recommendedName>
        <fullName evidence="1">U6 snRNA phosphodiesterase 1</fullName>
    </recommendedName>
    <alternativeName>
        <fullName evidence="1">3'-5' RNA exonuclease USB1</fullName>
        <ecNumber evidence="1">4.6.1.-</ecNumber>
    </alternativeName>
</protein>
<dbReference type="EC" id="4.6.1.-" evidence="1"/>
<dbReference type="EMBL" id="BC043765">
    <property type="protein sequence ID" value="AAH43765.1"/>
    <property type="molecule type" value="mRNA"/>
</dbReference>
<dbReference type="RefSeq" id="NP_001079479.1">
    <property type="nucleotide sequence ID" value="NM_001086010.1"/>
</dbReference>
<dbReference type="SMR" id="Q7ZYI9"/>
<dbReference type="DNASU" id="379166"/>
<dbReference type="GeneID" id="379166"/>
<dbReference type="KEGG" id="xla:379166"/>
<dbReference type="AGR" id="Xenbase:XB-GENE-6251623"/>
<dbReference type="CTD" id="379166"/>
<dbReference type="Xenbase" id="XB-GENE-6251623">
    <property type="gene designation" value="usb1.L"/>
</dbReference>
<dbReference type="OrthoDB" id="49151at2759"/>
<dbReference type="Proteomes" id="UP000186698">
    <property type="component" value="Chromosome 4L"/>
</dbReference>
<dbReference type="Bgee" id="379166">
    <property type="expression patterns" value="Expressed in testis and 19 other cell types or tissues"/>
</dbReference>
<dbReference type="GO" id="GO:0005634">
    <property type="term" value="C:nucleus"/>
    <property type="evidence" value="ECO:0000318"/>
    <property type="project" value="GO_Central"/>
</dbReference>
<dbReference type="GO" id="GO:0000175">
    <property type="term" value="F:3'-5'-RNA exonuclease activity"/>
    <property type="evidence" value="ECO:0000250"/>
    <property type="project" value="UniProtKB"/>
</dbReference>
<dbReference type="GO" id="GO:0016829">
    <property type="term" value="F:lyase activity"/>
    <property type="evidence" value="ECO:0007669"/>
    <property type="project" value="UniProtKB-KW"/>
</dbReference>
<dbReference type="GO" id="GO:1990838">
    <property type="term" value="F:poly(U)-specific exoribonuclease activity, producing 3' uridine cyclic phosphate ends"/>
    <property type="evidence" value="ECO:0000250"/>
    <property type="project" value="UniProtKB"/>
</dbReference>
<dbReference type="GO" id="GO:0034477">
    <property type="term" value="P:U6 snRNA 3'-end processing"/>
    <property type="evidence" value="ECO:0000318"/>
    <property type="project" value="GO_Central"/>
</dbReference>
<dbReference type="FunFam" id="3.90.1140.10:FF:000002">
    <property type="entry name" value="U6 snRNA phosphodiesterase"/>
    <property type="match status" value="1"/>
</dbReference>
<dbReference type="Gene3D" id="3.90.1140.10">
    <property type="entry name" value="Cyclic phosphodiesterase"/>
    <property type="match status" value="1"/>
</dbReference>
<dbReference type="HAMAP" id="MF_03040">
    <property type="entry name" value="USB1"/>
    <property type="match status" value="1"/>
</dbReference>
<dbReference type="InterPro" id="IPR027521">
    <property type="entry name" value="Usb1"/>
</dbReference>
<dbReference type="PANTHER" id="PTHR13522">
    <property type="entry name" value="U6 SNRNA PHOSPHODIESTERASE 1"/>
    <property type="match status" value="1"/>
</dbReference>
<dbReference type="PANTHER" id="PTHR13522:SF3">
    <property type="entry name" value="U6 SNRNA PHOSPHODIESTERASE 1"/>
    <property type="match status" value="1"/>
</dbReference>
<dbReference type="Pfam" id="PF09749">
    <property type="entry name" value="HVSL"/>
    <property type="match status" value="1"/>
</dbReference>